<comment type="function">
    <text evidence="1">A gamma subtype methylase, recognizes the double-stranded sequence 5'-CTCGAG-3', methylates A-5 on both strands, and protects the DNA from cleavage by the BstVI endonuclease.</text>
</comment>
<comment type="catalytic activity">
    <reaction>
        <text>a 2'-deoxyadenosine in DNA + S-adenosyl-L-methionine = an N(6)-methyl-2'-deoxyadenosine in DNA + S-adenosyl-L-homocysteine + H(+)</text>
        <dbReference type="Rhea" id="RHEA:15197"/>
        <dbReference type="Rhea" id="RHEA-COMP:12418"/>
        <dbReference type="Rhea" id="RHEA-COMP:12419"/>
        <dbReference type="ChEBI" id="CHEBI:15378"/>
        <dbReference type="ChEBI" id="CHEBI:57856"/>
        <dbReference type="ChEBI" id="CHEBI:59789"/>
        <dbReference type="ChEBI" id="CHEBI:90615"/>
        <dbReference type="ChEBI" id="CHEBI:90616"/>
        <dbReference type="EC" id="2.1.1.72"/>
    </reaction>
</comment>
<comment type="similarity">
    <text evidence="3">Belongs to the N(4)/N(6)-methyltransferase family.</text>
</comment>
<keyword id="KW-0238">DNA-binding</keyword>
<keyword id="KW-0489">Methyltransferase</keyword>
<keyword id="KW-0680">Restriction system</keyword>
<keyword id="KW-0949">S-adenosyl-L-methionine</keyword>
<keyword id="KW-0808">Transferase</keyword>
<dbReference type="EC" id="2.1.1.72"/>
<dbReference type="EMBL" id="L07642">
    <property type="protein sequence ID" value="AAA51408.1"/>
    <property type="molecule type" value="Genomic_DNA"/>
</dbReference>
<dbReference type="PIR" id="JN0797">
    <property type="entry name" value="JN0797"/>
</dbReference>
<dbReference type="SMR" id="P43422"/>
<dbReference type="REBASE" id="3331">
    <property type="entry name" value="M.BstVI"/>
</dbReference>
<dbReference type="PRO" id="PR:P43422"/>
<dbReference type="GO" id="GO:0003677">
    <property type="term" value="F:DNA binding"/>
    <property type="evidence" value="ECO:0007669"/>
    <property type="project" value="UniProtKB-KW"/>
</dbReference>
<dbReference type="GO" id="GO:0009007">
    <property type="term" value="F:site-specific DNA-methyltransferase (adenine-specific) activity"/>
    <property type="evidence" value="ECO:0007669"/>
    <property type="project" value="UniProtKB-EC"/>
</dbReference>
<dbReference type="GO" id="GO:0009307">
    <property type="term" value="P:DNA restriction-modification system"/>
    <property type="evidence" value="ECO:0007669"/>
    <property type="project" value="UniProtKB-KW"/>
</dbReference>
<dbReference type="GO" id="GO:0032259">
    <property type="term" value="P:methylation"/>
    <property type="evidence" value="ECO:0007669"/>
    <property type="project" value="UniProtKB-KW"/>
</dbReference>
<dbReference type="Gene3D" id="3.40.50.150">
    <property type="entry name" value="Vaccinia Virus protein VP39"/>
    <property type="match status" value="1"/>
</dbReference>
<dbReference type="InterPro" id="IPR002052">
    <property type="entry name" value="DNA_methylase_N6_adenine_CS"/>
</dbReference>
<dbReference type="InterPro" id="IPR011639">
    <property type="entry name" value="MethylTrfase_TaqI-like_dom"/>
</dbReference>
<dbReference type="InterPro" id="IPR050953">
    <property type="entry name" value="N4_N6_ade-DNA_methylase"/>
</dbReference>
<dbReference type="InterPro" id="IPR029063">
    <property type="entry name" value="SAM-dependent_MTases_sf"/>
</dbReference>
<dbReference type="InterPro" id="IPR025931">
    <property type="entry name" value="TaqI_C"/>
</dbReference>
<dbReference type="PANTHER" id="PTHR33841:SF1">
    <property type="entry name" value="DNA METHYLTRANSFERASE A"/>
    <property type="match status" value="1"/>
</dbReference>
<dbReference type="PANTHER" id="PTHR33841">
    <property type="entry name" value="DNA METHYLTRANSFERASE YEEA-RELATED"/>
    <property type="match status" value="1"/>
</dbReference>
<dbReference type="Pfam" id="PF07669">
    <property type="entry name" value="Eco57I"/>
    <property type="match status" value="1"/>
</dbReference>
<dbReference type="Pfam" id="PF12950">
    <property type="entry name" value="TaqI_C"/>
    <property type="match status" value="1"/>
</dbReference>
<dbReference type="PRINTS" id="PR00507">
    <property type="entry name" value="N12N6MTFRASE"/>
</dbReference>
<dbReference type="SUPFAM" id="SSF53335">
    <property type="entry name" value="S-adenosyl-L-methionine-dependent methyltransferases"/>
    <property type="match status" value="1"/>
</dbReference>
<dbReference type="PROSITE" id="PS00092">
    <property type="entry name" value="N6_MTASE"/>
    <property type="match status" value="1"/>
</dbReference>
<organism>
    <name type="scientific">Geobacillus stearothermophilus</name>
    <name type="common">Bacillus stearothermophilus</name>
    <dbReference type="NCBI Taxonomy" id="1422"/>
    <lineage>
        <taxon>Bacteria</taxon>
        <taxon>Bacillati</taxon>
        <taxon>Bacillota</taxon>
        <taxon>Bacilli</taxon>
        <taxon>Bacillales</taxon>
        <taxon>Anoxybacillaceae</taxon>
        <taxon>Geobacillus</taxon>
    </lineage>
</organism>
<name>MTV1_GEOSE</name>
<accession>P43422</accession>
<gene>
    <name evidence="2" type="primary">bstVIM</name>
</gene>
<proteinExistence type="inferred from homology"/>
<feature type="chain" id="PRO_0000087945" description="Type II methyltransferase M.BstVI">
    <location>
        <begin position="1"/>
        <end position="561"/>
    </location>
</feature>
<reference key="1">
    <citation type="journal article" date="1993" name="Gene">
        <title>Characterization of the bstVIRM genes encoding the Bacillus stearothermophilus V restriction-modification system.</title>
        <authorList>
            <person name="Gonzalez E."/>
            <person name="Vasquez C."/>
        </authorList>
    </citation>
    <scope>NUCLEOTIDE SEQUENCE [GENOMIC DNA]</scope>
    <source>
        <strain>V</strain>
    </source>
</reference>
<reference key="2">
    <citation type="journal article" date="2003" name="Nucleic Acids Res.">
        <title>A nomenclature for restriction enzymes, DNA methyltransferases, homing endonucleases and their genes.</title>
        <authorList>
            <person name="Roberts R.J."/>
            <person name="Belfort M."/>
            <person name="Bestor T."/>
            <person name="Bhagwat A.S."/>
            <person name="Bickle T.A."/>
            <person name="Bitinaite J."/>
            <person name="Blumenthal R.M."/>
            <person name="Degtyarev S.K."/>
            <person name="Dryden D.T."/>
            <person name="Dybvig K."/>
            <person name="Firman K."/>
            <person name="Gromova E.S."/>
            <person name="Gumport R.I."/>
            <person name="Halford S.E."/>
            <person name="Hattman S."/>
            <person name="Heitman J."/>
            <person name="Hornby D.P."/>
            <person name="Janulaitis A."/>
            <person name="Jeltsch A."/>
            <person name="Josephsen J."/>
            <person name="Kiss A."/>
            <person name="Klaenhammer T.R."/>
            <person name="Kobayashi I."/>
            <person name="Kong H."/>
            <person name="Krueger D.H."/>
            <person name="Lacks S."/>
            <person name="Marinus M.G."/>
            <person name="Miyahara M."/>
            <person name="Morgan R.D."/>
            <person name="Murray N.E."/>
            <person name="Nagaraja V."/>
            <person name="Piekarowicz A."/>
            <person name="Pingoud A."/>
            <person name="Raleigh E."/>
            <person name="Rao D.N."/>
            <person name="Reich N."/>
            <person name="Repin V.E."/>
            <person name="Selker E.U."/>
            <person name="Shaw P.C."/>
            <person name="Stein D.C."/>
            <person name="Stoddard B.L."/>
            <person name="Szybalski W."/>
            <person name="Trautner T.A."/>
            <person name="Van Etten J.L."/>
            <person name="Vitor J.M."/>
            <person name="Wilson G.G."/>
            <person name="Xu S.Y."/>
        </authorList>
    </citation>
    <scope>NOMENCLATURE</scope>
    <scope>SUBTYPE</scope>
</reference>
<sequence>MVTQHSYRMHGAVYTKPIIVDLILDLTGYTSDKNLENFKLLDPSFGDGVFLEAAVHRLMDSLIRRGYRPNELIDHLGNCIRGIELRLEAYQAGRHRLQKVLEGYGFSKPEINWLINQWIIQADFLLWQEDTTEAIKFDFVVGNPPYVRQELIQDELIKKYRKRYTTIYDRADLYVPFIQHSLELLSEQGTLGIICSDRFTKNRYGKKLRKFITDNYKVRYIVDLHKTSPFENEVTAYPAIYVIKTKNYDKSVVRAVYTEVITSKVCQDAKDFLLSNQKPDQSSKEMKTYVFSEWFAGDEPWIIQSQECREILRRLENRFPLIEDDVHSCKIRIGVATGADKVYIVDPQQVDIEPEVLLPLVTTADISSGRIIWSGKHVINPFNSDGGLINLDDFPRLKTYFQQHEEIIKNRNVAKKNPSQWFRTIDRIYPEIVHQPKLLIPDMKNTNHIVKDDGAFYPHHNLYYILPGNWNIDILRAILLSSVVKFFIWSYATKMRGDTLRYQAQYLRKIRLPDPKSLTNDQKERLMDERVIQSQEYLDSIVAEIYQLSKTEIEIIKDALE</sequence>
<evidence type="ECO:0000303" key="1">
    <source>
    </source>
</evidence>
<evidence type="ECO:0000303" key="2">
    <source>
    </source>
</evidence>
<evidence type="ECO:0000305" key="3"/>
<protein>
    <recommendedName>
        <fullName evidence="1">Type II methyltransferase M.BstVI</fullName>
        <shortName evidence="2">M.BstVI</shortName>
        <ecNumber>2.1.1.72</ecNumber>
    </recommendedName>
    <alternativeName>
        <fullName>Adenine-specific methyltransferase BstVI</fullName>
    </alternativeName>
    <alternativeName>
        <fullName>Modification methylase BstVI</fullName>
    </alternativeName>
</protein>